<protein>
    <recommendedName>
        <fullName evidence="1">Small ribosomal subunit protein uS8</fullName>
    </recommendedName>
    <alternativeName>
        <fullName evidence="2">30S ribosomal protein S8</fullName>
    </alternativeName>
</protein>
<reference key="1">
    <citation type="journal article" date="2014" name="Stand. Genomic Sci.">
        <title>Complete genome sequence of Anabaena variabilis ATCC 29413.</title>
        <authorList>
            <person name="Thiel T."/>
            <person name="Pratte B.S."/>
            <person name="Zhong J."/>
            <person name="Goodwin L."/>
            <person name="Copeland A."/>
            <person name="Lucas S."/>
            <person name="Han C."/>
            <person name="Pitluck S."/>
            <person name="Land M.L."/>
            <person name="Kyrpides N.C."/>
            <person name="Woyke T."/>
        </authorList>
    </citation>
    <scope>NUCLEOTIDE SEQUENCE [LARGE SCALE GENOMIC DNA]</scope>
    <source>
        <strain>ATCC 29413 / PCC 7937</strain>
    </source>
</reference>
<keyword id="KW-0687">Ribonucleoprotein</keyword>
<keyword id="KW-0689">Ribosomal protein</keyword>
<keyword id="KW-0694">RNA-binding</keyword>
<keyword id="KW-0699">rRNA-binding</keyword>
<gene>
    <name evidence="1" type="primary">rpsH</name>
    <name evidence="1" type="synonym">rps8</name>
    <name type="ordered locus">Ava_0704</name>
</gene>
<sequence length="133" mass="14794">MAANDTIADMLTRIRNANMARHQTTLVPATKMTRSIAKVLQEEGFIAEISEEGDEVKRNLVIALKYKGKNRQPLITALKRVSKPGLRVYSNRKELPRVLGGIGIAIISTSSGIMTDREARRQNLGGEVLCYVW</sequence>
<dbReference type="EMBL" id="CP000117">
    <property type="protein sequence ID" value="ABA20328.1"/>
    <property type="molecule type" value="Genomic_DNA"/>
</dbReference>
<dbReference type="SMR" id="Q3MFA8"/>
<dbReference type="STRING" id="240292.Ava_0704"/>
<dbReference type="KEGG" id="ava:Ava_0704"/>
<dbReference type="eggNOG" id="COG0096">
    <property type="taxonomic scope" value="Bacteria"/>
</dbReference>
<dbReference type="HOGENOM" id="CLU_098428_0_2_3"/>
<dbReference type="Proteomes" id="UP000002533">
    <property type="component" value="Chromosome"/>
</dbReference>
<dbReference type="GO" id="GO:1990904">
    <property type="term" value="C:ribonucleoprotein complex"/>
    <property type="evidence" value="ECO:0007669"/>
    <property type="project" value="UniProtKB-KW"/>
</dbReference>
<dbReference type="GO" id="GO:0005840">
    <property type="term" value="C:ribosome"/>
    <property type="evidence" value="ECO:0007669"/>
    <property type="project" value="UniProtKB-KW"/>
</dbReference>
<dbReference type="GO" id="GO:0019843">
    <property type="term" value="F:rRNA binding"/>
    <property type="evidence" value="ECO:0007669"/>
    <property type="project" value="UniProtKB-UniRule"/>
</dbReference>
<dbReference type="GO" id="GO:0003735">
    <property type="term" value="F:structural constituent of ribosome"/>
    <property type="evidence" value="ECO:0007669"/>
    <property type="project" value="InterPro"/>
</dbReference>
<dbReference type="GO" id="GO:0006412">
    <property type="term" value="P:translation"/>
    <property type="evidence" value="ECO:0007669"/>
    <property type="project" value="UniProtKB-UniRule"/>
</dbReference>
<dbReference type="FunFam" id="3.30.1370.30:FF:000002">
    <property type="entry name" value="30S ribosomal protein S8"/>
    <property type="match status" value="1"/>
</dbReference>
<dbReference type="FunFam" id="3.30.1490.10:FF:000001">
    <property type="entry name" value="30S ribosomal protein S8"/>
    <property type="match status" value="1"/>
</dbReference>
<dbReference type="Gene3D" id="3.30.1370.30">
    <property type="match status" value="1"/>
</dbReference>
<dbReference type="Gene3D" id="3.30.1490.10">
    <property type="match status" value="1"/>
</dbReference>
<dbReference type="HAMAP" id="MF_01302_B">
    <property type="entry name" value="Ribosomal_uS8_B"/>
    <property type="match status" value="1"/>
</dbReference>
<dbReference type="InterPro" id="IPR000630">
    <property type="entry name" value="Ribosomal_uS8"/>
</dbReference>
<dbReference type="InterPro" id="IPR047863">
    <property type="entry name" value="Ribosomal_uS8_CS"/>
</dbReference>
<dbReference type="InterPro" id="IPR035987">
    <property type="entry name" value="Ribosomal_uS8_sf"/>
</dbReference>
<dbReference type="NCBIfam" id="NF001109">
    <property type="entry name" value="PRK00136.1"/>
    <property type="match status" value="1"/>
</dbReference>
<dbReference type="PANTHER" id="PTHR11758">
    <property type="entry name" value="40S RIBOSOMAL PROTEIN S15A"/>
    <property type="match status" value="1"/>
</dbReference>
<dbReference type="Pfam" id="PF00410">
    <property type="entry name" value="Ribosomal_S8"/>
    <property type="match status" value="1"/>
</dbReference>
<dbReference type="SUPFAM" id="SSF56047">
    <property type="entry name" value="Ribosomal protein S8"/>
    <property type="match status" value="1"/>
</dbReference>
<dbReference type="PROSITE" id="PS00053">
    <property type="entry name" value="RIBOSOMAL_S8"/>
    <property type="match status" value="1"/>
</dbReference>
<accession>Q3MFA8</accession>
<feature type="chain" id="PRO_0000228860" description="Small ribosomal subunit protein uS8">
    <location>
        <begin position="1"/>
        <end position="133"/>
    </location>
</feature>
<comment type="function">
    <text evidence="1">One of the primary rRNA binding proteins, it binds directly to 16S rRNA central domain where it helps coordinate assembly of the platform of the 30S subunit.</text>
</comment>
<comment type="subunit">
    <text evidence="1">Part of the 30S ribosomal subunit. Contacts proteins S5 and S12.</text>
</comment>
<comment type="similarity">
    <text evidence="1">Belongs to the universal ribosomal protein uS8 family.</text>
</comment>
<name>RS8_TRIV2</name>
<proteinExistence type="inferred from homology"/>
<evidence type="ECO:0000255" key="1">
    <source>
        <dbReference type="HAMAP-Rule" id="MF_01302"/>
    </source>
</evidence>
<evidence type="ECO:0000305" key="2"/>
<organism>
    <name type="scientific">Trichormus variabilis (strain ATCC 29413 / PCC 7937)</name>
    <name type="common">Anabaena variabilis</name>
    <dbReference type="NCBI Taxonomy" id="240292"/>
    <lineage>
        <taxon>Bacteria</taxon>
        <taxon>Bacillati</taxon>
        <taxon>Cyanobacteriota</taxon>
        <taxon>Cyanophyceae</taxon>
        <taxon>Nostocales</taxon>
        <taxon>Nostocaceae</taxon>
        <taxon>Trichormus</taxon>
    </lineage>
</organism>